<comment type="function">
    <text evidence="4">May play an important role in regulating differentiation, survival and aggressiveness of the tumor cells.</text>
</comment>
<comment type="interaction">
    <interactant intactId="EBI-743880">
        <id>Q8WUY3</id>
    </interactant>
    <interactant intactId="EBI-296087">
        <id>P31749</id>
        <label>AKT1</label>
    </interactant>
    <organismsDiffer>false</organismsDiffer>
    <experiments>3</experiments>
</comment>
<comment type="interaction">
    <interactant intactId="EBI-743880">
        <id>Q8WUY3</id>
    </interactant>
    <interactant intactId="EBI-21535880">
        <id>Q92870-2</id>
        <label>APBB2</label>
    </interactant>
    <organismsDiffer>false</organismsDiffer>
    <experiments>3</experiments>
</comment>
<comment type="interaction">
    <interactant intactId="EBI-743880">
        <id>Q8WUY3</id>
    </interactant>
    <interactant intactId="EBI-10988864">
        <id>P46379-2</id>
        <label>BAG6</label>
    </interactant>
    <organismsDiffer>false</organismsDiffer>
    <experiments>3</experiments>
</comment>
<comment type="interaction">
    <interactant intactId="EBI-743880">
        <id>Q8WUY3</id>
    </interactant>
    <interactant intactId="EBI-12275524">
        <id>P23560-2</id>
        <label>BDNF</label>
    </interactant>
    <organismsDiffer>false</organismsDiffer>
    <experiments>3</experiments>
</comment>
<comment type="interaction">
    <interactant intactId="EBI-743880">
        <id>Q8WUY3</id>
    </interactant>
    <interactant intactId="EBI-739060">
        <id>P02511</id>
        <label>CRYAB</label>
    </interactant>
    <organismsDiffer>false</organismsDiffer>
    <experiments>3</experiments>
</comment>
<comment type="interaction">
    <interactant intactId="EBI-743880">
        <id>Q8WUY3</id>
    </interactant>
    <interactant intactId="EBI-354056">
        <id>P04406</id>
        <label>GAPDH</label>
    </interactant>
    <organismsDiffer>false</organismsDiffer>
    <experiments>3</experiments>
</comment>
<comment type="interaction">
    <interactant intactId="EBI-743880">
        <id>Q8WUY3</id>
    </interactant>
    <interactant intactId="EBI-296047">
        <id>P07900</id>
        <label>HSP90AA1</label>
    </interactant>
    <organismsDiffer>false</organismsDiffer>
    <experiments>3</experiments>
</comment>
<comment type="interaction">
    <interactant intactId="EBI-743880">
        <id>Q8WUY3</id>
    </interactant>
    <interactant intactId="EBI-352682">
        <id>P04792</id>
        <label>HSPB1</label>
    </interactant>
    <organismsDiffer>false</organismsDiffer>
    <experiments>3</experiments>
</comment>
<comment type="interaction">
    <interactant intactId="EBI-743880">
        <id>Q8WUY3</id>
    </interactant>
    <interactant intactId="EBI-352528">
        <id>P10809</id>
        <label>HSPD1</label>
    </interactant>
    <organismsDiffer>false</organismsDiffer>
    <experiments>3</experiments>
</comment>
<comment type="interaction">
    <interactant intactId="EBI-743880">
        <id>Q8WUY3</id>
    </interactant>
    <interactant intactId="EBI-466029">
        <id>P42858</id>
        <label>HTT</label>
    </interactant>
    <organismsDiffer>false</organismsDiffer>
    <experiments>3</experiments>
</comment>
<comment type="interaction">
    <interactant intactId="EBI-743880">
        <id>Q8WUY3</id>
    </interactant>
    <interactant intactId="EBI-948266">
        <id>O14901</id>
        <label>KLF11</label>
    </interactant>
    <organismsDiffer>false</organismsDiffer>
    <experiments>3</experiments>
</comment>
<comment type="interaction">
    <interactant intactId="EBI-743880">
        <id>Q8WUY3</id>
    </interactant>
    <interactant intactId="EBI-716404">
        <id>P16284</id>
        <label>PECAM1</label>
    </interactant>
    <organismsDiffer>false</organismsDiffer>
    <experiments>3</experiments>
</comment>
<comment type="interaction">
    <interactant intactId="EBI-743880">
        <id>Q8WUY3</id>
    </interactant>
    <interactant intactId="EBI-711909">
        <id>P02766</id>
        <label>TTR</label>
    </interactant>
    <organismsDiffer>false</organismsDiffer>
    <experiments>3</experiments>
</comment>
<comment type="interaction">
    <interactant intactId="EBI-743880">
        <id>Q8WUY3</id>
    </interactant>
    <interactant intactId="EBI-473850">
        <id>P61086</id>
        <label>UBE2K</label>
    </interactant>
    <organismsDiffer>false</organismsDiffer>
    <experiments>3</experiments>
</comment>
<comment type="interaction">
    <interactant intactId="EBI-743880">
        <id>Q8WUY3</id>
    </interactant>
    <interactant intactId="EBI-353844">
        <id>P08670</id>
        <label>VIM</label>
    </interactant>
    <organismsDiffer>false</organismsDiffer>
    <experiments>3</experiments>
</comment>
<comment type="interaction">
    <interactant intactId="EBI-743880">
        <id>Q8WUY3</id>
    </interactant>
    <interactant intactId="EBI-720609">
        <id>O76024</id>
        <label>WFS1</label>
    </interactant>
    <organismsDiffer>false</organismsDiffer>
    <experiments>3</experiments>
</comment>
<comment type="subcellular location">
    <subcellularLocation>
        <location evidence="4">Cytoplasm</location>
    </subcellularLocation>
</comment>
<comment type="alternative products">
    <event type="alternative splicing"/>
    <isoform>
        <id>Q8WUY3-1</id>
        <name>1</name>
        <sequence type="displayed"/>
    </isoform>
    <isoform>
        <id>Q8WUY3-2</id>
        <name>2</name>
        <sequence type="described" ref="VSP_039341"/>
    </isoform>
    <isoform>
        <id>Q8WUY3-3</id>
        <name>3</name>
        <name>BNIPXL-alpha</name>
        <sequence type="described" ref="VSP_039341 VSP_039342"/>
    </isoform>
    <isoform>
        <id>Q8WUY3-4</id>
        <name>4</name>
        <name>BNIPXL-beta</name>
        <sequence type="described" ref="VSP_039341 VSP_039342 VSP_039343"/>
    </isoform>
    <isoform>
        <id>Q8WUY3-5</id>
        <name>5</name>
        <sequence type="described" ref="VSP_039339 VSP_039340"/>
    </isoform>
</comment>
<comment type="tissue specificity">
    <text evidence="4">A high level of expression seen in the nervous system (brain, cerebellum and spinal cord) as well as adrenal gland. Expressed at high levels in noneuroblastoma, rhabdomyosarcoma, melanoma and some osteosarcoma cell lines, whereas at only low levels in cancer cell lines of liver, breast, thyroid and colon. Expression is significantly higher in favorable tumors than aggressive ones.</text>
</comment>
<comment type="developmental stage">
    <text>Induced during the G1 phase of the cell cycle.</text>
</comment>
<comment type="induction">
    <text evidence="4">Down-regulated after NGF-induced differentiation, and up-regulated during the NGF-depletion-induced apoptosis.</text>
</comment>
<comment type="miscellaneous">
    <text>PRUNE2/BMCC1 and PCA3, one of the most prostate cancer specific markers are overlapping genes in reverse orientation. However, they do not appear to be coregulated.</text>
</comment>
<comment type="similarity">
    <text evidence="10">Belongs to the PPase class C family. Prune subfamily.</text>
</comment>
<comment type="sequence caution" evidence="10">
    <conflict type="erroneous initiation">
        <sequence resource="EMBL-CDS" id="AAH22571"/>
    </conflict>
    <text>Truncated N-terminus.</text>
</comment>
<comment type="sequence caution" evidence="10">
    <conflict type="miscellaneous discrepancy">
        <sequence resource="EMBL-CDS" id="AAH22571"/>
    </conflict>
    <text>Aberrant splicing.</text>
</comment>
<comment type="sequence caution" evidence="10">
    <conflict type="erroneous initiation">
        <sequence resource="EMBL-CDS" id="AAR15150"/>
    </conflict>
    <text>Truncated N-terminus.</text>
</comment>
<comment type="sequence caution" evidence="10">
    <conflict type="erroneous initiation">
        <sequence resource="EMBL-CDS" id="AAR15151"/>
    </conflict>
    <text>Truncated N-terminus.</text>
</comment>
<comment type="sequence caution" evidence="10">
    <conflict type="erroneous initiation">
        <sequence resource="EMBL-CDS" id="BAD93351"/>
    </conflict>
    <text>Truncated N-terminus.</text>
</comment>
<reference key="1">
    <citation type="journal article" date="2004" name="Nat. Genet.">
        <title>Complete sequencing and characterization of 21,243 full-length human cDNAs.</title>
        <authorList>
            <person name="Ota T."/>
            <person name="Suzuki Y."/>
            <person name="Nishikawa T."/>
            <person name="Otsuki T."/>
            <person name="Sugiyama T."/>
            <person name="Irie R."/>
            <person name="Wakamatsu A."/>
            <person name="Hayashi K."/>
            <person name="Sato H."/>
            <person name="Nagai K."/>
            <person name="Kimura K."/>
            <person name="Makita H."/>
            <person name="Sekine M."/>
            <person name="Obayashi M."/>
            <person name="Nishi T."/>
            <person name="Shibahara T."/>
            <person name="Tanaka T."/>
            <person name="Ishii S."/>
            <person name="Yamamoto J."/>
            <person name="Saito K."/>
            <person name="Kawai Y."/>
            <person name="Isono Y."/>
            <person name="Nakamura Y."/>
            <person name="Nagahari K."/>
            <person name="Murakami K."/>
            <person name="Yasuda T."/>
            <person name="Iwayanagi T."/>
            <person name="Wagatsuma M."/>
            <person name="Shiratori A."/>
            <person name="Sudo H."/>
            <person name="Hosoiri T."/>
            <person name="Kaku Y."/>
            <person name="Kodaira H."/>
            <person name="Kondo H."/>
            <person name="Sugawara M."/>
            <person name="Takahashi M."/>
            <person name="Kanda K."/>
            <person name="Yokoi T."/>
            <person name="Furuya T."/>
            <person name="Kikkawa E."/>
            <person name="Omura Y."/>
            <person name="Abe K."/>
            <person name="Kamihara K."/>
            <person name="Katsuta N."/>
            <person name="Sato K."/>
            <person name="Tanikawa M."/>
            <person name="Yamazaki M."/>
            <person name="Ninomiya K."/>
            <person name="Ishibashi T."/>
            <person name="Yamashita H."/>
            <person name="Murakawa K."/>
            <person name="Fujimori K."/>
            <person name="Tanai H."/>
            <person name="Kimata M."/>
            <person name="Watanabe M."/>
            <person name="Hiraoka S."/>
            <person name="Chiba Y."/>
            <person name="Ishida S."/>
            <person name="Ono Y."/>
            <person name="Takiguchi S."/>
            <person name="Watanabe S."/>
            <person name="Yosida M."/>
            <person name="Hotuta T."/>
            <person name="Kusano J."/>
            <person name="Kanehori K."/>
            <person name="Takahashi-Fujii A."/>
            <person name="Hara H."/>
            <person name="Tanase T.-O."/>
            <person name="Nomura Y."/>
            <person name="Togiya S."/>
            <person name="Komai F."/>
            <person name="Hara R."/>
            <person name="Takeuchi K."/>
            <person name="Arita M."/>
            <person name="Imose N."/>
            <person name="Musashino K."/>
            <person name="Yuuki H."/>
            <person name="Oshima A."/>
            <person name="Sasaki N."/>
            <person name="Aotsuka S."/>
            <person name="Yoshikawa Y."/>
            <person name="Matsunawa H."/>
            <person name="Ichihara T."/>
            <person name="Shiohata N."/>
            <person name="Sano S."/>
            <person name="Moriya S."/>
            <person name="Momiyama H."/>
            <person name="Satoh N."/>
            <person name="Takami S."/>
            <person name="Terashima Y."/>
            <person name="Suzuki O."/>
            <person name="Nakagawa S."/>
            <person name="Senoh A."/>
            <person name="Mizoguchi H."/>
            <person name="Goto Y."/>
            <person name="Shimizu F."/>
            <person name="Wakebe H."/>
            <person name="Hishigaki H."/>
            <person name="Watanabe T."/>
            <person name="Sugiyama A."/>
            <person name="Takemoto M."/>
            <person name="Kawakami B."/>
            <person name="Yamazaki M."/>
            <person name="Watanabe K."/>
            <person name="Kumagai A."/>
            <person name="Itakura S."/>
            <person name="Fukuzumi Y."/>
            <person name="Fujimori Y."/>
            <person name="Komiyama M."/>
            <person name="Tashiro H."/>
            <person name="Tanigami A."/>
            <person name="Fujiwara T."/>
            <person name="Ono T."/>
            <person name="Yamada K."/>
            <person name="Fujii Y."/>
            <person name="Ozaki K."/>
            <person name="Hirao M."/>
            <person name="Ohmori Y."/>
            <person name="Kawabata A."/>
            <person name="Hikiji T."/>
            <person name="Kobatake N."/>
            <person name="Inagaki H."/>
            <person name="Ikema Y."/>
            <person name="Okamoto S."/>
            <person name="Okitani R."/>
            <person name="Kawakami T."/>
            <person name="Noguchi S."/>
            <person name="Itoh T."/>
            <person name="Shigeta K."/>
            <person name="Senba T."/>
            <person name="Matsumura K."/>
            <person name="Nakajima Y."/>
            <person name="Mizuno T."/>
            <person name="Morinaga M."/>
            <person name="Sasaki M."/>
            <person name="Togashi T."/>
            <person name="Oyama M."/>
            <person name="Hata H."/>
            <person name="Watanabe M."/>
            <person name="Komatsu T."/>
            <person name="Mizushima-Sugano J."/>
            <person name="Satoh T."/>
            <person name="Shirai Y."/>
            <person name="Takahashi Y."/>
            <person name="Nakagawa K."/>
            <person name="Okumura K."/>
            <person name="Nagase T."/>
            <person name="Nomura N."/>
            <person name="Kikuchi H."/>
            <person name="Masuho Y."/>
            <person name="Yamashita R."/>
            <person name="Nakai K."/>
            <person name="Yada T."/>
            <person name="Nakamura Y."/>
            <person name="Ohara O."/>
            <person name="Isogai T."/>
            <person name="Sugano S."/>
        </authorList>
    </citation>
    <scope>NUCLEOTIDE SEQUENCE [LARGE SCALE MRNA] (ISOFORM 5)</scope>
</reference>
<reference key="2">
    <citation type="journal article" date="2004" name="Nature">
        <title>DNA sequence and analysis of human chromosome 9.</title>
        <authorList>
            <person name="Humphray S.J."/>
            <person name="Oliver K."/>
            <person name="Hunt A.R."/>
            <person name="Plumb R.W."/>
            <person name="Loveland J.E."/>
            <person name="Howe K.L."/>
            <person name="Andrews T.D."/>
            <person name="Searle S."/>
            <person name="Hunt S.E."/>
            <person name="Scott C.E."/>
            <person name="Jones M.C."/>
            <person name="Ainscough R."/>
            <person name="Almeida J.P."/>
            <person name="Ambrose K.D."/>
            <person name="Ashwell R.I.S."/>
            <person name="Babbage A.K."/>
            <person name="Babbage S."/>
            <person name="Bagguley C.L."/>
            <person name="Bailey J."/>
            <person name="Banerjee R."/>
            <person name="Barker D.J."/>
            <person name="Barlow K.F."/>
            <person name="Bates K."/>
            <person name="Beasley H."/>
            <person name="Beasley O."/>
            <person name="Bird C.P."/>
            <person name="Bray-Allen S."/>
            <person name="Brown A.J."/>
            <person name="Brown J.Y."/>
            <person name="Burford D."/>
            <person name="Burrill W."/>
            <person name="Burton J."/>
            <person name="Carder C."/>
            <person name="Carter N.P."/>
            <person name="Chapman J.C."/>
            <person name="Chen Y."/>
            <person name="Clarke G."/>
            <person name="Clark S.Y."/>
            <person name="Clee C.M."/>
            <person name="Clegg S."/>
            <person name="Collier R.E."/>
            <person name="Corby N."/>
            <person name="Crosier M."/>
            <person name="Cummings A.T."/>
            <person name="Davies J."/>
            <person name="Dhami P."/>
            <person name="Dunn M."/>
            <person name="Dutta I."/>
            <person name="Dyer L.W."/>
            <person name="Earthrowl M.E."/>
            <person name="Faulkner L."/>
            <person name="Fleming C.J."/>
            <person name="Frankish A."/>
            <person name="Frankland J.A."/>
            <person name="French L."/>
            <person name="Fricker D.G."/>
            <person name="Garner P."/>
            <person name="Garnett J."/>
            <person name="Ghori J."/>
            <person name="Gilbert J.G.R."/>
            <person name="Glison C."/>
            <person name="Grafham D.V."/>
            <person name="Gribble S."/>
            <person name="Griffiths C."/>
            <person name="Griffiths-Jones S."/>
            <person name="Grocock R."/>
            <person name="Guy J."/>
            <person name="Hall R.E."/>
            <person name="Hammond S."/>
            <person name="Harley J.L."/>
            <person name="Harrison E.S.I."/>
            <person name="Hart E.A."/>
            <person name="Heath P.D."/>
            <person name="Henderson C.D."/>
            <person name="Hopkins B.L."/>
            <person name="Howard P.J."/>
            <person name="Howden P.J."/>
            <person name="Huckle E."/>
            <person name="Johnson C."/>
            <person name="Johnson D."/>
            <person name="Joy A.A."/>
            <person name="Kay M."/>
            <person name="Keenan S."/>
            <person name="Kershaw J.K."/>
            <person name="Kimberley A.M."/>
            <person name="King A."/>
            <person name="Knights A."/>
            <person name="Laird G.K."/>
            <person name="Langford C."/>
            <person name="Lawlor S."/>
            <person name="Leongamornlert D.A."/>
            <person name="Leversha M."/>
            <person name="Lloyd C."/>
            <person name="Lloyd D.M."/>
            <person name="Lovell J."/>
            <person name="Martin S."/>
            <person name="Mashreghi-Mohammadi M."/>
            <person name="Matthews L."/>
            <person name="McLaren S."/>
            <person name="McLay K.E."/>
            <person name="McMurray A."/>
            <person name="Milne S."/>
            <person name="Nickerson T."/>
            <person name="Nisbett J."/>
            <person name="Nordsiek G."/>
            <person name="Pearce A.V."/>
            <person name="Peck A.I."/>
            <person name="Porter K.M."/>
            <person name="Pandian R."/>
            <person name="Pelan S."/>
            <person name="Phillimore B."/>
            <person name="Povey S."/>
            <person name="Ramsey Y."/>
            <person name="Rand V."/>
            <person name="Scharfe M."/>
            <person name="Sehra H.K."/>
            <person name="Shownkeen R."/>
            <person name="Sims S.K."/>
            <person name="Skuce C.D."/>
            <person name="Smith M."/>
            <person name="Steward C.A."/>
            <person name="Swarbreck D."/>
            <person name="Sycamore N."/>
            <person name="Tester J."/>
            <person name="Thorpe A."/>
            <person name="Tracey A."/>
            <person name="Tromans A."/>
            <person name="Thomas D.W."/>
            <person name="Wall M."/>
            <person name="Wallis J.M."/>
            <person name="West A.P."/>
            <person name="Whitehead S.L."/>
            <person name="Willey D.L."/>
            <person name="Williams S.A."/>
            <person name="Wilming L."/>
            <person name="Wray P.W."/>
            <person name="Young L."/>
            <person name="Ashurst J.L."/>
            <person name="Coulson A."/>
            <person name="Blocker H."/>
            <person name="Durbin R.M."/>
            <person name="Sulston J.E."/>
            <person name="Hubbard T."/>
            <person name="Jackson M.J."/>
            <person name="Bentley D.R."/>
            <person name="Beck S."/>
            <person name="Rogers J."/>
            <person name="Dunham I."/>
        </authorList>
    </citation>
    <scope>NUCLEOTIDE SEQUENCE [LARGE SCALE GENOMIC DNA]</scope>
</reference>
<reference key="3">
    <citation type="journal article" date="2004" name="Genome Res.">
        <title>The status, quality, and expansion of the NIH full-length cDNA project: the Mammalian Gene Collection (MGC).</title>
        <authorList>
            <consortium name="The MGC Project Team"/>
        </authorList>
    </citation>
    <scope>NUCLEOTIDE SEQUENCE [LARGE SCALE MRNA] (ISOFORM 5)</scope>
    <source>
        <tissue>Hypothalamus</tissue>
    </source>
</reference>
<reference key="4">
    <citation type="journal article" date="2006" name="Oncogene">
        <title>Increased expression of proapoptotic BMCC1, a novel gene with the BNIP2 and Cdc42GAP homology (BCH) domain, is associated with favorable prognosis in human neuroblastomas.</title>
        <authorList>
            <person name="Machida T."/>
            <person name="Fujita T."/>
            <person name="Ooo M.L."/>
            <person name="Ohira M."/>
            <person name="Isogai E."/>
            <person name="Mihara M."/>
            <person name="Hirato J."/>
            <person name="Tomotsune D."/>
            <person name="Hirata T."/>
            <person name="Fujimori M."/>
            <person name="Adachi W."/>
            <person name="Nakagawara A."/>
        </authorList>
    </citation>
    <scope>NUCLEOTIDE SEQUENCE [MRNA] OF 253-3088 (ISOFORM 1)</scope>
    <scope>FUNCTION</scope>
    <scope>INDUCTION</scope>
    <scope>TISSUE SPECIFICITY</scope>
    <scope>SUBCELLULAR LOCATION</scope>
    <source>
        <tissue>Neuroblastoma</tissue>
    </source>
</reference>
<reference key="5">
    <citation type="submission" date="2003-10" db="EMBL/GenBank/DDBJ databases">
        <title>BNIPXL, an extra long member of the BNIP-2 family.</title>
        <authorList>
            <person name="Soh J.K.U."/>
            <person name="Zhou Y.T."/>
            <person name="Low B.C."/>
        </authorList>
    </citation>
    <scope>NUCLEOTIDE SEQUENCE [MRNA] OF 2265-3088 (ISOFORMS 3 AND 4)</scope>
    <source>
        <tissue>Brain</tissue>
        <tissue>Kidney</tissue>
    </source>
</reference>
<reference key="6">
    <citation type="journal article" date="1997" name="DNA Res.">
        <title>Prediction of the coding sequences of unidentified human genes. VII. The complete sequences of 100 new cDNA clones from brain which can code for large proteins in vitro.</title>
        <authorList>
            <person name="Nagase T."/>
            <person name="Ishikawa K."/>
            <person name="Nakajima D."/>
            <person name="Ohira M."/>
            <person name="Seki N."/>
            <person name="Miyajima N."/>
            <person name="Tanaka A."/>
            <person name="Kotani H."/>
            <person name="Nomura N."/>
            <person name="Ohara O."/>
        </authorList>
    </citation>
    <scope>NUCLEOTIDE SEQUENCE [LARGE SCALE MRNA] OF 2265-3088 (ISOFORM 2)</scope>
    <source>
        <tissue>Brain</tissue>
    </source>
</reference>
<reference key="7">
    <citation type="journal article" date="2002" name="DNA Res.">
        <title>Construction of expression-ready cDNA clones for KIAA genes: manual curation of 330 KIAA cDNA clones.</title>
        <authorList>
            <person name="Nakajima D."/>
            <person name="Okazaki N."/>
            <person name="Yamakawa H."/>
            <person name="Kikuno R."/>
            <person name="Ohara O."/>
            <person name="Nagase T."/>
        </authorList>
    </citation>
    <scope>SEQUENCE REVISION</scope>
</reference>
<reference key="8">
    <citation type="journal article" date="2006" name="Cell">
        <title>Global, in vivo, and site-specific phosphorylation dynamics in signaling networks.</title>
        <authorList>
            <person name="Olsen J.V."/>
            <person name="Blagoev B."/>
            <person name="Gnad F."/>
            <person name="Macek B."/>
            <person name="Kumar C."/>
            <person name="Mortensen P."/>
            <person name="Mann M."/>
        </authorList>
    </citation>
    <scope>IDENTIFICATION BY MASS SPECTROMETRY [LARGE SCALE ANALYSIS]</scope>
    <source>
        <tissue>Cervix carcinoma</tissue>
    </source>
</reference>
<reference key="9">
    <citation type="journal article" date="2010" name="Prostate">
        <title>Differential expression of PCA3 and its overlapping PRUNE2 transcript in prostate cancer.</title>
        <authorList>
            <person name="Salagierski M."/>
            <person name="Verhaegh G.W."/>
            <person name="Jannink S.A."/>
            <person name="Smit F.P."/>
            <person name="Hessels D."/>
            <person name="Schalken J.A."/>
        </authorList>
    </citation>
    <scope>GENE REGULATION</scope>
</reference>
<reference key="10">
    <citation type="journal article" date="2012" name="Proc. Natl. Acad. Sci. U.S.A.">
        <title>N-terminal acetylome analyses and functional insights of the N-terminal acetyltransferase NatB.</title>
        <authorList>
            <person name="Van Damme P."/>
            <person name="Lasa M."/>
            <person name="Polevoda B."/>
            <person name="Gazquez C."/>
            <person name="Elosegui-Artola A."/>
            <person name="Kim D.S."/>
            <person name="De Juan-Pardo E."/>
            <person name="Demeyer K."/>
            <person name="Hole K."/>
            <person name="Larrea E."/>
            <person name="Timmerman E."/>
            <person name="Prieto J."/>
            <person name="Arnesen T."/>
            <person name="Sherman F."/>
            <person name="Gevaert K."/>
            <person name="Aldabe R."/>
        </authorList>
    </citation>
    <scope>ACETYLATION [LARGE SCALE ANALYSIS] AT MET-1</scope>
    <scope>IDENTIFICATION BY MASS SPECTROMETRY [LARGE SCALE ANALYSIS]</scope>
</reference>
<reference key="11">
    <citation type="journal article" date="2014" name="J. Proteomics">
        <title>An enzyme assisted RP-RPLC approach for in-depth analysis of human liver phosphoproteome.</title>
        <authorList>
            <person name="Bian Y."/>
            <person name="Song C."/>
            <person name="Cheng K."/>
            <person name="Dong M."/>
            <person name="Wang F."/>
            <person name="Huang J."/>
            <person name="Sun D."/>
            <person name="Wang L."/>
            <person name="Ye M."/>
            <person name="Zou H."/>
        </authorList>
    </citation>
    <scope>IDENTIFICATION BY MASS SPECTROMETRY [LARGE SCALE ANALYSIS]</scope>
    <source>
        <tissue>Liver</tissue>
    </source>
</reference>
<reference key="12">
    <citation type="journal article" date="2012" name="N. Engl. J. Med.">
        <title>Diagnostic exome sequencing in persons with severe intellectual disability.</title>
        <authorList>
            <person name="de Ligt J."/>
            <person name="Willemsen M.H."/>
            <person name="van Bon B.W."/>
            <person name="Kleefstra T."/>
            <person name="Yntema H.G."/>
            <person name="Kroes T."/>
            <person name="Vulto-van Silfhout A.T."/>
            <person name="Koolen D.A."/>
            <person name="de Vries P."/>
            <person name="Gilissen C."/>
            <person name="del Rosario M."/>
            <person name="Hoischen A."/>
            <person name="Scheffer H."/>
            <person name="de Vries B.B."/>
            <person name="Brunner H.G."/>
            <person name="Veltman J.A."/>
            <person name="Vissers L.E."/>
        </authorList>
    </citation>
    <scope>VARIANT LYS-806</scope>
</reference>
<keyword id="KW-0007">Acetylation</keyword>
<keyword id="KW-0025">Alternative splicing</keyword>
<keyword id="KW-0053">Apoptosis</keyword>
<keyword id="KW-0963">Cytoplasm</keyword>
<keyword id="KW-0464">Manganese</keyword>
<keyword id="KW-0479">Metal-binding</keyword>
<keyword id="KW-1267">Proteomics identification</keyword>
<keyword id="KW-1185">Reference proteome</keyword>
<protein>
    <recommendedName>
        <fullName>Protein prune homolog 2</fullName>
    </recommendedName>
    <alternativeName>
        <fullName>BNIP2 motif-containing molecule at the C-terminal region 1</fullName>
    </alternativeName>
</protein>
<gene>
    <name type="primary">PRUNE2</name>
    <name type="synonym">BMCC1</name>
    <name type="synonym">BNIPXL</name>
    <name type="synonym">C9orf65</name>
    <name type="synonym">KIAA0367</name>
</gene>
<name>PRUN2_HUMAN</name>
<dbReference type="EMBL" id="AK298805">
    <property type="protein sequence ID" value="BAG60940.1"/>
    <property type="molecule type" value="mRNA"/>
</dbReference>
<dbReference type="EMBL" id="AL161626">
    <property type="status" value="NOT_ANNOTATED_CDS"/>
    <property type="molecule type" value="Genomic_DNA"/>
</dbReference>
<dbReference type="EMBL" id="AL359314">
    <property type="status" value="NOT_ANNOTATED_CDS"/>
    <property type="molecule type" value="Genomic_DNA"/>
</dbReference>
<dbReference type="EMBL" id="AL390239">
    <property type="status" value="NOT_ANNOTATED_CDS"/>
    <property type="molecule type" value="Genomic_DNA"/>
</dbReference>
<dbReference type="EMBL" id="BC022571">
    <property type="protein sequence ID" value="AAH22571.1"/>
    <property type="status" value="ALT_SEQ"/>
    <property type="molecule type" value="mRNA"/>
</dbReference>
<dbReference type="EMBL" id="AB050197">
    <property type="protein sequence ID" value="BAD93351.1"/>
    <property type="status" value="ALT_INIT"/>
    <property type="molecule type" value="mRNA"/>
</dbReference>
<dbReference type="EMBL" id="AY439213">
    <property type="protein sequence ID" value="AAR15150.1"/>
    <property type="status" value="ALT_INIT"/>
    <property type="molecule type" value="mRNA"/>
</dbReference>
<dbReference type="EMBL" id="AY439214">
    <property type="protein sequence ID" value="AAR15151.1"/>
    <property type="status" value="ALT_INIT"/>
    <property type="molecule type" value="mRNA"/>
</dbReference>
<dbReference type="EMBL" id="AB002365">
    <property type="protein sequence ID" value="BAA20822.2"/>
    <property type="molecule type" value="mRNA"/>
</dbReference>
<dbReference type="CCDS" id="CCDS47982.1">
    <molecule id="Q8WUY3-1"/>
</dbReference>
<dbReference type="RefSeq" id="NP_001294976.1">
    <property type="nucleotide sequence ID" value="NM_001308047.1"/>
</dbReference>
<dbReference type="RefSeq" id="NP_001294977.1">
    <property type="nucleotide sequence ID" value="NM_001308048.1"/>
</dbReference>
<dbReference type="RefSeq" id="NP_001294978.1">
    <property type="nucleotide sequence ID" value="NM_001308049.1"/>
</dbReference>
<dbReference type="RefSeq" id="NP_001294979.1">
    <molecule id="Q8WUY3-5"/>
    <property type="nucleotide sequence ID" value="NM_001308050.2"/>
</dbReference>
<dbReference type="RefSeq" id="NP_001294980.1">
    <property type="nucleotide sequence ID" value="NM_001308051.1"/>
</dbReference>
<dbReference type="RefSeq" id="NP_056040.2">
    <molecule id="Q8WUY3-1"/>
    <property type="nucleotide sequence ID" value="NM_015225.3"/>
</dbReference>
<dbReference type="RefSeq" id="XP_011516625.1">
    <molecule id="Q8WUY3-2"/>
    <property type="nucleotide sequence ID" value="XM_011518323.3"/>
</dbReference>
<dbReference type="SMR" id="Q8WUY3"/>
<dbReference type="BioGRID" id="127687">
    <property type="interactions" value="30"/>
</dbReference>
<dbReference type="ELM" id="Q8WUY3"/>
<dbReference type="FunCoup" id="Q8WUY3">
    <property type="interactions" value="1690"/>
</dbReference>
<dbReference type="IntAct" id="Q8WUY3">
    <property type="interactions" value="31"/>
</dbReference>
<dbReference type="MINT" id="Q8WUY3"/>
<dbReference type="STRING" id="9606.ENSP00000365908"/>
<dbReference type="GlyGen" id="Q8WUY3">
    <property type="glycosylation" value="2 sites"/>
</dbReference>
<dbReference type="iPTMnet" id="Q8WUY3"/>
<dbReference type="PhosphoSitePlus" id="Q8WUY3"/>
<dbReference type="BioMuta" id="PRUNE2"/>
<dbReference type="DMDM" id="298286907"/>
<dbReference type="jPOST" id="Q8WUY3"/>
<dbReference type="MassIVE" id="Q8WUY3"/>
<dbReference type="PaxDb" id="9606-ENSP00000365908"/>
<dbReference type="PeptideAtlas" id="Q8WUY3"/>
<dbReference type="ProteomicsDB" id="74722">
    <molecule id="Q8WUY3-1"/>
</dbReference>
<dbReference type="ProteomicsDB" id="74723">
    <molecule id="Q8WUY3-2"/>
</dbReference>
<dbReference type="ProteomicsDB" id="74724">
    <molecule id="Q8WUY3-3"/>
</dbReference>
<dbReference type="ProteomicsDB" id="74725">
    <molecule id="Q8WUY3-4"/>
</dbReference>
<dbReference type="ProteomicsDB" id="74726">
    <molecule id="Q8WUY3-5"/>
</dbReference>
<dbReference type="Pumba" id="Q8WUY3"/>
<dbReference type="Antibodypedia" id="27288">
    <property type="antibodies" value="108 antibodies from 27 providers"/>
</dbReference>
<dbReference type="DNASU" id="158471"/>
<dbReference type="Ensembl" id="ENST00000376718.8">
    <molecule id="Q8WUY3-1"/>
    <property type="protein sequence ID" value="ENSP00000365908.3"/>
    <property type="gene ID" value="ENSG00000106772.19"/>
</dbReference>
<dbReference type="GeneID" id="158471"/>
<dbReference type="KEGG" id="hsa:158471"/>
<dbReference type="MANE-Select" id="ENST00000376718.8">
    <property type="protein sequence ID" value="ENSP00000365908.3"/>
    <property type="RefSeq nucleotide sequence ID" value="NM_015225.3"/>
    <property type="RefSeq protein sequence ID" value="NP_056040.2"/>
</dbReference>
<dbReference type="UCSC" id="uc010mpk.4">
    <molecule id="Q8WUY3-1"/>
    <property type="organism name" value="human"/>
</dbReference>
<dbReference type="AGR" id="HGNC:25209"/>
<dbReference type="CTD" id="158471"/>
<dbReference type="DisGeNET" id="158471"/>
<dbReference type="GeneCards" id="PRUNE2"/>
<dbReference type="HGNC" id="HGNC:25209">
    <property type="gene designation" value="PRUNE2"/>
</dbReference>
<dbReference type="HPA" id="ENSG00000106772">
    <property type="expression patterns" value="Tissue enhanced (intestine)"/>
</dbReference>
<dbReference type="MIM" id="610691">
    <property type="type" value="gene"/>
</dbReference>
<dbReference type="neXtProt" id="NX_Q8WUY3"/>
<dbReference type="OpenTargets" id="ENSG00000106772"/>
<dbReference type="PharmGKB" id="PA162400198"/>
<dbReference type="VEuPathDB" id="HostDB:ENSG00000106772"/>
<dbReference type="eggNOG" id="KOG4129">
    <property type="taxonomic scope" value="Eukaryota"/>
</dbReference>
<dbReference type="GeneTree" id="ENSGT00940000154422"/>
<dbReference type="HOGENOM" id="CLU_227259_0_0_1"/>
<dbReference type="InParanoid" id="Q8WUY3"/>
<dbReference type="OMA" id="WMDAKQP"/>
<dbReference type="OrthoDB" id="19923at2759"/>
<dbReference type="PAN-GO" id="Q8WUY3">
    <property type="GO annotations" value="2 GO annotations based on evolutionary models"/>
</dbReference>
<dbReference type="PhylomeDB" id="Q8WUY3"/>
<dbReference type="TreeFam" id="TF323914"/>
<dbReference type="PathwayCommons" id="Q8WUY3"/>
<dbReference type="SignaLink" id="Q8WUY3"/>
<dbReference type="BioGRID-ORCS" id="158471">
    <property type="hits" value="12 hits in 1155 CRISPR screens"/>
</dbReference>
<dbReference type="ChiTaRS" id="PRUNE2">
    <property type="organism name" value="human"/>
</dbReference>
<dbReference type="GeneWiki" id="PRUNE2"/>
<dbReference type="GenomeRNAi" id="158471"/>
<dbReference type="Pharos" id="Q8WUY3">
    <property type="development level" value="Tbio"/>
</dbReference>
<dbReference type="PRO" id="PR:Q8WUY3"/>
<dbReference type="Proteomes" id="UP000005640">
    <property type="component" value="Chromosome 9"/>
</dbReference>
<dbReference type="RNAct" id="Q8WUY3">
    <property type="molecule type" value="protein"/>
</dbReference>
<dbReference type="Bgee" id="ENSG00000106772">
    <property type="expression patterns" value="Expressed in dorsal root ganglion and 200 other cell types or tissues"/>
</dbReference>
<dbReference type="ExpressionAtlas" id="Q8WUY3">
    <property type="expression patterns" value="baseline and differential"/>
</dbReference>
<dbReference type="GO" id="GO:0005737">
    <property type="term" value="C:cytoplasm"/>
    <property type="evidence" value="ECO:0000318"/>
    <property type="project" value="GO_Central"/>
</dbReference>
<dbReference type="GO" id="GO:0005829">
    <property type="term" value="C:cytosol"/>
    <property type="evidence" value="ECO:0000314"/>
    <property type="project" value="HPA"/>
</dbReference>
<dbReference type="GO" id="GO:0098978">
    <property type="term" value="C:glutamatergic synapse"/>
    <property type="evidence" value="ECO:0007669"/>
    <property type="project" value="Ensembl"/>
</dbReference>
<dbReference type="GO" id="GO:0098793">
    <property type="term" value="C:presynapse"/>
    <property type="evidence" value="ECO:0007669"/>
    <property type="project" value="Ensembl"/>
</dbReference>
<dbReference type="GO" id="GO:0046872">
    <property type="term" value="F:metal ion binding"/>
    <property type="evidence" value="ECO:0007669"/>
    <property type="project" value="UniProtKB-KW"/>
</dbReference>
<dbReference type="GO" id="GO:0016462">
    <property type="term" value="F:pyrophosphatase activity"/>
    <property type="evidence" value="ECO:0007669"/>
    <property type="project" value="InterPro"/>
</dbReference>
<dbReference type="GO" id="GO:0006915">
    <property type="term" value="P:apoptotic process"/>
    <property type="evidence" value="ECO:0000318"/>
    <property type="project" value="GO_Central"/>
</dbReference>
<dbReference type="CDD" id="cd00170">
    <property type="entry name" value="SEC14"/>
    <property type="match status" value="1"/>
</dbReference>
<dbReference type="FunFam" id="3.40.525.10:FF:000001">
    <property type="entry name" value="BCL2/adenovirus E1B protein-interacting protein 2"/>
    <property type="match status" value="1"/>
</dbReference>
<dbReference type="FunFam" id="3.10.310.20:FF:000002">
    <property type="entry name" value="Prune homolog 2 with BCH domain"/>
    <property type="match status" value="1"/>
</dbReference>
<dbReference type="FunFam" id="3.90.1640.10:FF:000003">
    <property type="entry name" value="Prune homolog 2 with BCH domain"/>
    <property type="match status" value="1"/>
</dbReference>
<dbReference type="Gene3D" id="3.40.525.10">
    <property type="entry name" value="CRAL-TRIO lipid binding domain"/>
    <property type="match status" value="1"/>
</dbReference>
<dbReference type="Gene3D" id="3.10.310.20">
    <property type="entry name" value="DHHA2 domain"/>
    <property type="match status" value="1"/>
</dbReference>
<dbReference type="Gene3D" id="3.90.1640.10">
    <property type="entry name" value="inorganic pyrophosphatase (n-terminal core)"/>
    <property type="match status" value="1"/>
</dbReference>
<dbReference type="InterPro" id="IPR022181">
    <property type="entry name" value="Bcl2-/adenovirus-E1B"/>
</dbReference>
<dbReference type="InterPro" id="IPR001251">
    <property type="entry name" value="CRAL-TRIO_dom"/>
</dbReference>
<dbReference type="InterPro" id="IPR036865">
    <property type="entry name" value="CRAL-TRIO_dom_sf"/>
</dbReference>
<dbReference type="InterPro" id="IPR038763">
    <property type="entry name" value="DHH_sf"/>
</dbReference>
<dbReference type="InterPro" id="IPR004097">
    <property type="entry name" value="DHHA2"/>
</dbReference>
<dbReference type="InterPro" id="IPR038222">
    <property type="entry name" value="DHHA2_dom_sf"/>
</dbReference>
<dbReference type="PANTHER" id="PTHR12112">
    <property type="entry name" value="BNIP - RELATED"/>
    <property type="match status" value="1"/>
</dbReference>
<dbReference type="PANTHER" id="PTHR12112:SF11">
    <property type="entry name" value="PROTEIN PRUNE HOMOLOG 2"/>
    <property type="match status" value="1"/>
</dbReference>
<dbReference type="Pfam" id="PF12496">
    <property type="entry name" value="BNIP2"/>
    <property type="match status" value="1"/>
</dbReference>
<dbReference type="Pfam" id="PF13716">
    <property type="entry name" value="CRAL_TRIO_2"/>
    <property type="match status" value="1"/>
</dbReference>
<dbReference type="Pfam" id="PF02833">
    <property type="entry name" value="DHHA2"/>
    <property type="match status" value="1"/>
</dbReference>
<dbReference type="SMART" id="SM01131">
    <property type="entry name" value="DHHA2"/>
    <property type="match status" value="1"/>
</dbReference>
<dbReference type="SMART" id="SM00516">
    <property type="entry name" value="SEC14"/>
    <property type="match status" value="1"/>
</dbReference>
<dbReference type="SUPFAM" id="SSF52087">
    <property type="entry name" value="CRAL/TRIO domain"/>
    <property type="match status" value="1"/>
</dbReference>
<dbReference type="SUPFAM" id="SSF64182">
    <property type="entry name" value="DHH phosphoesterases"/>
    <property type="match status" value="1"/>
</dbReference>
<dbReference type="PROSITE" id="PS50191">
    <property type="entry name" value="CRAL_TRIO"/>
    <property type="match status" value="1"/>
</dbReference>
<accession>Q8WUY3</accession>
<accession>B3KYC4</accession>
<accession>B4DQH8</accession>
<accession>O15073</accession>
<accession>Q58A63</accession>
<accession>Q5JUB6</accession>
<accession>Q5T304</accession>
<accession>Q5T476</accession>
<accession>Q6T2V6</accession>
<accession>Q6T2V7</accession>
<accession>Q8N665</accession>
<proteinExistence type="evidence at protein level"/>
<organism>
    <name type="scientific">Homo sapiens</name>
    <name type="common">Human</name>
    <dbReference type="NCBI Taxonomy" id="9606"/>
    <lineage>
        <taxon>Eukaryota</taxon>
        <taxon>Metazoa</taxon>
        <taxon>Chordata</taxon>
        <taxon>Craniata</taxon>
        <taxon>Vertebrata</taxon>
        <taxon>Euteleostomi</taxon>
        <taxon>Mammalia</taxon>
        <taxon>Eutheria</taxon>
        <taxon>Euarchontoglires</taxon>
        <taxon>Primates</taxon>
        <taxon>Haplorrhini</taxon>
        <taxon>Catarrhini</taxon>
        <taxon>Hominidae</taxon>
        <taxon>Homo</taxon>
    </lineage>
</organism>
<feature type="chain" id="PRO_0000089701" description="Protein prune homolog 2">
    <location>
        <begin position="1"/>
        <end position="3088"/>
    </location>
</feature>
<feature type="domain" description="CRAL-TRIO" evidence="2">
    <location>
        <begin position="2895"/>
        <end position="3056"/>
    </location>
</feature>
<feature type="region of interest" description="Disordered" evidence="3">
    <location>
        <begin position="433"/>
        <end position="468"/>
    </location>
</feature>
<feature type="region of interest" description="Disordered" evidence="3">
    <location>
        <begin position="490"/>
        <end position="628"/>
    </location>
</feature>
<feature type="region of interest" description="Disordered" evidence="3">
    <location>
        <begin position="673"/>
        <end position="759"/>
    </location>
</feature>
<feature type="region of interest" description="Disordered" evidence="3">
    <location>
        <begin position="771"/>
        <end position="795"/>
    </location>
</feature>
<feature type="region of interest" description="Disordered" evidence="3">
    <location>
        <begin position="846"/>
        <end position="909"/>
    </location>
</feature>
<feature type="region of interest" description="Disordered" evidence="3">
    <location>
        <begin position="952"/>
        <end position="1080"/>
    </location>
</feature>
<feature type="region of interest" description="Disordered" evidence="3">
    <location>
        <begin position="1192"/>
        <end position="1211"/>
    </location>
</feature>
<feature type="region of interest" description="Disordered" evidence="3">
    <location>
        <begin position="1231"/>
        <end position="1371"/>
    </location>
</feature>
<feature type="region of interest" description="Disordered" evidence="3">
    <location>
        <begin position="1413"/>
        <end position="1452"/>
    </location>
</feature>
<feature type="region of interest" description="Disordered" evidence="3">
    <location>
        <begin position="1472"/>
        <end position="1491"/>
    </location>
</feature>
<feature type="region of interest" description="Disordered" evidence="3">
    <location>
        <begin position="1515"/>
        <end position="1585"/>
    </location>
</feature>
<feature type="region of interest" description="Disordered" evidence="3">
    <location>
        <begin position="1632"/>
        <end position="1698"/>
    </location>
</feature>
<feature type="region of interest" description="Disordered" evidence="3">
    <location>
        <begin position="1741"/>
        <end position="1768"/>
    </location>
</feature>
<feature type="region of interest" description="Disordered" evidence="3">
    <location>
        <begin position="1782"/>
        <end position="1813"/>
    </location>
</feature>
<feature type="region of interest" description="Disordered" evidence="3">
    <location>
        <begin position="2089"/>
        <end position="2114"/>
    </location>
</feature>
<feature type="region of interest" description="Disordered" evidence="3">
    <location>
        <begin position="2173"/>
        <end position="2215"/>
    </location>
</feature>
<feature type="region of interest" description="Disordered" evidence="3">
    <location>
        <begin position="2240"/>
        <end position="2260"/>
    </location>
</feature>
<feature type="region of interest" description="Disordered" evidence="3">
    <location>
        <begin position="2492"/>
        <end position="2542"/>
    </location>
</feature>
<feature type="region of interest" description="Disordered" evidence="3">
    <location>
        <begin position="2589"/>
        <end position="2667"/>
    </location>
</feature>
<feature type="region of interest" description="Disordered" evidence="3">
    <location>
        <begin position="2687"/>
        <end position="2710"/>
    </location>
</feature>
<feature type="region of interest" description="Disordered" evidence="3">
    <location>
        <begin position="2814"/>
        <end position="2833"/>
    </location>
</feature>
<feature type="region of interest" description="Disordered" evidence="3">
    <location>
        <begin position="2841"/>
        <end position="2875"/>
    </location>
</feature>
<feature type="short sequence motif" description="DHH motif" evidence="1">
    <location>
        <begin position="109"/>
        <end position="111"/>
    </location>
</feature>
<feature type="compositionally biased region" description="Low complexity" evidence="3">
    <location>
        <begin position="503"/>
        <end position="512"/>
    </location>
</feature>
<feature type="compositionally biased region" description="Basic and acidic residues" evidence="3">
    <location>
        <begin position="562"/>
        <end position="582"/>
    </location>
</feature>
<feature type="compositionally biased region" description="Polar residues" evidence="3">
    <location>
        <begin position="613"/>
        <end position="625"/>
    </location>
</feature>
<feature type="compositionally biased region" description="Polar residues" evidence="3">
    <location>
        <begin position="673"/>
        <end position="684"/>
    </location>
</feature>
<feature type="compositionally biased region" description="Basic and acidic residues" evidence="3">
    <location>
        <begin position="685"/>
        <end position="699"/>
    </location>
</feature>
<feature type="compositionally biased region" description="Polar residues" evidence="3">
    <location>
        <begin position="750"/>
        <end position="759"/>
    </location>
</feature>
<feature type="compositionally biased region" description="Polar residues" evidence="3">
    <location>
        <begin position="846"/>
        <end position="857"/>
    </location>
</feature>
<feature type="compositionally biased region" description="Basic and acidic residues" evidence="3">
    <location>
        <begin position="865"/>
        <end position="876"/>
    </location>
</feature>
<feature type="compositionally biased region" description="Polar residues" evidence="3">
    <location>
        <begin position="881"/>
        <end position="894"/>
    </location>
</feature>
<feature type="compositionally biased region" description="Basic and acidic residues" evidence="3">
    <location>
        <begin position="895"/>
        <end position="909"/>
    </location>
</feature>
<feature type="compositionally biased region" description="Low complexity" evidence="3">
    <location>
        <begin position="964"/>
        <end position="977"/>
    </location>
</feature>
<feature type="compositionally biased region" description="Basic and acidic residues" evidence="3">
    <location>
        <begin position="980"/>
        <end position="1000"/>
    </location>
</feature>
<feature type="compositionally biased region" description="Polar residues" evidence="3">
    <location>
        <begin position="1001"/>
        <end position="1027"/>
    </location>
</feature>
<feature type="compositionally biased region" description="Polar residues" evidence="3">
    <location>
        <begin position="1037"/>
        <end position="1048"/>
    </location>
</feature>
<feature type="compositionally biased region" description="Basic and acidic residues" evidence="3">
    <location>
        <begin position="1049"/>
        <end position="1062"/>
    </location>
</feature>
<feature type="compositionally biased region" description="Basic and acidic residues" evidence="3">
    <location>
        <begin position="1192"/>
        <end position="1208"/>
    </location>
</feature>
<feature type="compositionally biased region" description="Basic and acidic residues" evidence="3">
    <location>
        <begin position="1282"/>
        <end position="1293"/>
    </location>
</feature>
<feature type="compositionally biased region" description="Basic and acidic residues" evidence="3">
    <location>
        <begin position="1314"/>
        <end position="1339"/>
    </location>
</feature>
<feature type="compositionally biased region" description="Basic and acidic residues" evidence="3">
    <location>
        <begin position="1425"/>
        <end position="1434"/>
    </location>
</feature>
<feature type="compositionally biased region" description="Polar residues" evidence="3">
    <location>
        <begin position="1436"/>
        <end position="1450"/>
    </location>
</feature>
<feature type="compositionally biased region" description="Polar residues" evidence="3">
    <location>
        <begin position="1537"/>
        <end position="1585"/>
    </location>
</feature>
<feature type="compositionally biased region" description="Acidic residues" evidence="3">
    <location>
        <begin position="1687"/>
        <end position="1698"/>
    </location>
</feature>
<feature type="compositionally biased region" description="Polar residues" evidence="3">
    <location>
        <begin position="1752"/>
        <end position="1768"/>
    </location>
</feature>
<feature type="compositionally biased region" description="Basic and acidic residues" evidence="3">
    <location>
        <begin position="2516"/>
        <end position="2542"/>
    </location>
</feature>
<feature type="compositionally biased region" description="Basic and acidic residues" evidence="3">
    <location>
        <begin position="2604"/>
        <end position="2622"/>
    </location>
</feature>
<feature type="compositionally biased region" description="Polar residues" evidence="3">
    <location>
        <begin position="2623"/>
        <end position="2632"/>
    </location>
</feature>
<feature type="compositionally biased region" description="Acidic residues" evidence="3">
    <location>
        <begin position="2823"/>
        <end position="2833"/>
    </location>
</feature>
<feature type="modified residue" description="N-acetylmethionine" evidence="11">
    <location>
        <position position="1"/>
    </location>
</feature>
<feature type="splice variant" id="VSP_039339" description="In isoform 5." evidence="6 7">
    <location>
        <begin position="1"/>
        <end position="2736"/>
    </location>
</feature>
<feature type="splice variant" id="VSP_039340" description="In isoform 5." evidence="6 7">
    <original>PDTEMEEETEFLELGTRISRPNG</original>
    <variation>MLKSCSRASFSPSVRKPPLILRR</variation>
    <location>
        <begin position="2737"/>
        <end position="2759"/>
    </location>
</feature>
<feature type="splice variant" id="VSP_039341" description="In isoform 2, isoform 3 and isoform 4." evidence="8 9">
    <original>H</original>
    <variation>HE</variation>
    <location>
        <position position="2852"/>
    </location>
</feature>
<feature type="splice variant" id="VSP_039342" description="In isoform 3 and isoform 4." evidence="9">
    <original>G</original>
    <variation>GGLR</variation>
    <location>
        <position position="2909"/>
    </location>
</feature>
<feature type="splice variant" id="VSP_039343" description="In isoform 4." evidence="9">
    <original>LDEELREASEAAKTSCLYNDPEMSSMEKDIDLKLKEKP</original>
    <variation>Y</variation>
    <location>
        <begin position="3051"/>
        <end position="3088"/>
    </location>
</feature>
<feature type="sequence variant" id="VAR_069436" description="In dbSNP:rs375315668." evidence="5">
    <original>E</original>
    <variation>K</variation>
    <location>
        <position position="806"/>
    </location>
</feature>
<feature type="sequence conflict" description="In Ref. 4; BAD93351." evidence="10" ref="4">
    <original>P</original>
    <variation>S</variation>
    <location>
        <position position="1675"/>
    </location>
</feature>
<feature type="sequence conflict" description="In Ref. 5; AAR15150/AAR15151." evidence="10" ref="5">
    <original>L</original>
    <variation>I</variation>
    <location>
        <position position="2401"/>
    </location>
</feature>
<feature type="sequence conflict" description="In Ref. 4; BAD93351 and 6; BAA20822." evidence="10" ref="4 6">
    <original>S</original>
    <variation>P</variation>
    <location>
        <position position="2511"/>
    </location>
</feature>
<feature type="sequence conflict" description="In Ref. 4; BAD93351 and 6; BAA20822." evidence="10" ref="4 6">
    <original>S</original>
    <variation>G</variation>
    <location>
        <position position="2618"/>
    </location>
</feature>
<feature type="sequence conflict" description="In Ref. 4; BAD93351, 5; AAR15150/AAR15151 and 6; BAA20822." evidence="10" ref="4 5 6">
    <location>
        <begin position="2711"/>
        <end position="2715"/>
    </location>
</feature>
<feature type="sequence conflict" description="In Ref. 4; BAD93351 and 6; BAA20822." evidence="10" ref="4 6">
    <original>N</original>
    <variation>S</variation>
    <location>
        <position position="2721"/>
    </location>
</feature>
<feature type="sequence conflict" description="In Ref. 4; BAD93351 and 6; BAA20822." evidence="10" ref="4 6">
    <original>P</original>
    <variation>S</variation>
    <location>
        <position position="2737"/>
    </location>
</feature>
<feature type="sequence conflict" description="In Ref. 5; AAR15150/AAR15151." evidence="10" ref="5">
    <original>N</original>
    <variation>T</variation>
    <location>
        <position position="2857"/>
    </location>
</feature>
<feature type="sequence conflict" description="In Ref. 5; AAR15150/AAR15151." evidence="10" ref="5">
    <original>E</original>
    <variation>D</variation>
    <location>
        <position position="2889"/>
    </location>
</feature>
<sequence length="3088" mass="340635">MEEFLQRAKSKLNRSKRLEKVHVVIGPKSCDLDSLISTFTYAYFLDKVSPPGVLCLPVLNIPRTEFNYFTETRFILEELNISESFHIFRDEINLHQLNDEGKLSITLVGSSVLASEDKTLESAVVKVINPVEQSDANVEFRESSSSLVLKEILQEAPELITEQLAHRLRGSILFKWMTMESEKISEKQEEILSILEEKFPNLPPREDIINVLQETQFSAQGLSIEQTMLKDLKELSDGEIKVAISTVSMNLENCLFHSNITSDLKAFTDKFGFDVLILFSSYLSEEQQPRRQIAVYSENMELCSQICCELEECQNPCLELEPFDCGCDEILVYQQEDPSVTCDQVVLVVKEVINRRCPEMVSNSRTSSTEAVAGSAPLSQGSSGIMELYGSDIEPQPSSVNFIENPPDLNDSNQAQVDANVDLVSPDSGLATIRSSRSSKESSVFLSDDSPVGEGAGPHHTLLPGLDSYSPIPEGAVAEEHAWSGEHGEHFDLFNFDPAPMASGQSQQSSHSADYSPADDFFPNSDLSEGQLPAGPEGLDGMGTNMSNYSSSSLLSGAGKDSLVEHDEEFVQRQDSPRDNSERNLSLTDFVGDESPSPERLKNTGKRIPPTPMNSLVESSPSTEEPASLYTEDMTQKATDTGHMGPPQTHARCSSWWGGLEIDSKNIADAWSSSEQESVFQSPESWKEHKPSSIDRRASDSVFQPKSLEFTKSGPWESEFGQPELGSNDIQDKNEESLPFQNLPMEKSPLPNTSPQGTNHLIEDFASLWHSGRSPTAMPEPWGNPTDDGEPAAVAPFPAWSAFGKEDHDEALKNTWNLHPTSSKTPSVRDPNEWAMAKSGFAFSSSELLDNSPSEINNEAAPEIWGKKNNDSRDHIFAPGNPSSDLDHTWTNSKPPKEDQNGLVDPKTRGKVYEKVDSWNLFEENMKKGGSDVLVPWEDSFLSYKCSDYSASNLGEDSVPSPLDTNYSTSDSYTSPTFAGDEKETEHKPFAKEEGFESKDGNSTAEETDIPPQSLQQSSRNRISSGPGNLDMWASPHTDNSSEINTTHNLDENELKTEHTDGKNISMEDDVGESSQSSYDDPSMMQLYNETNRQLTLLHSSTNSRQTAPDSLDLWNRVILEDTQSTATISDMDNDLDWDDCSGGAAIPSDGQTEGYMAEGSEPETRFTVRQLEPWGLEYQEANQVDWELPASDEHTKDSAPSEHHTLNEKSGQLIANSIWDSVMRDKDMSSFMLPGSSHITDSEQRELPPEIPSHSANVKDTHSPDAPAASGTSESEALISHLDKQDTERETLQSDAASLATRLENPGYFPHPDPWKGHGDGQSESEKEAQGATDRGHLDEEEVIASGVENASGISEKGQSDQELSSLVASEHQEICIKSGKISSLAVTFSPQTEEPEEVLEYEEGSYNLDSRDVQTGMSADNLQPKDTHEKHLMSQRNSGETTETSDGMNFTKYVSVPEKDLEKTEECNFLEPENVGGGPPHRVPRSLDFGDVPIDSDVHVSSTCSEITKNLDVKGSENSLPGAGSSGNFDRDTISSEYTHSSASSPELNDSSVALSSWGQQPSSGYQEENQGNWSEQNHQESELITTDGQVEIVTKVKDLEKNRINEFEKSFDRKTPTFLEIWNDSVDGDSFSSLSSPETGKYSEHSGTHQESNLIASYQEKNEHDISATVQPEDARVISTSSGSDDDSVGGEESIEEEIQVANCHVAEDESRAWDSLNESNKFLVTADPKSENIYDYLDSSEPAENENKSNPFCDNQQSSPDPWTFSPLTETEMQITAVEKEKRSSPETGTTGDVAWQISPKASFPKNEDNSQLEMLGFSADSTEWWKASPQEGRLIESPFERELSDSSGVLEINSSVHQNASPWGVPVQGDIEPVETHYTNPFSDNHQSPFLEGNGKNSHEQLWNIQPRQPDPDADKFSQLVKLDQIKEKDSREQTFVSAAGDELTPETPTQEQCQDTMLPVCDHPDTAFTHAEENSCVTSNVSTNEGQETNQWEQEKSYLGEMTNSSIATENFPAVSSPTQLIMKPGSEWDGSTPSEDSRGTFVPDILHGNFQEGGQLASAAPDLWIDAKKPFSLKADGENPDILTHCEHDSNSQASDSPDICHDSEAKQETEKHLSACMGPEVESSELCLTEPEIDEEPIYEPGREFVPSNAELDSENATVLPPIGYQADIKGSSQPASHKGSPEPSEINGDNSTGLQVSEKGASPDMAPILEPVDRRIPRIENVATSIFVTHQEPTPEGDGSWISDSFSPESQPGARALFDGDPHLSTENPALVPDALLASDTCLDISEAAFDHSFSDASGLNTSTGTIDDMSKLTLSEGHPETPVDGDLGKQDICSSEASWGDFEYDVMGQNIDEDLLREPEHFLYGGDPPLEEDSLKQSLAPYTPPFDLSYLTEPAQSAETIEEAGSPEDESLGCRAAEIVLSALPDRRSEGNQAETKNRLPGSQLAVLHIREDPESVYLPVGAGSNILSPSNVDWEVETDNSDLPAGGDIGPPNGASKEISELEEEKTIPTKEPEQIKSEYKEERCTEKNEDRHALHMDYILVNREENSHSKPETCEERESIAELELYVGSKETGLQGTQLASFPDTCQPASLNERKGLSAEKMSSKSDTRSSFESPAQDQSWMFLGHSEVGDPSLDARDSGPGWSGKTVEPFSELGLGEGPQLQILEEMKPLESLALEEASGPVSQSQKSKSRGRAGPDAVTLQAVTHDNEWEMLSPQPVQKNMIPDTEMEEETEFLELGTRISRPNGLLSEDVGMDIPFEEGVLSPSAADMRPEPPNSLDLNDTHPRRIKLTAPNINLSLDQSEGSILSDDNLDSPDEIDINVDELDTPDEADSFEYTGHDPTANKDSGQESESIPEYTAEEEREDNRLWRTVVIGEQEQRIDMKVIEPYRRVISHGGYYGDGLNAIIVFAACFLPDSSRADYHYVMENLFLYVISTLELMVAEDYMIVYLNGATPRRRMPGLGWMKKCYQMIDRRLRKNLKSFIIVHPSWFIRTILAVTRPFISSKFSSKIKYVNSLSELSGLIPMDCIHIPESIIKLDEELREASEAAKTSCLYNDPEMSSMEKDIDLKLKEKP</sequence>
<evidence type="ECO:0000250" key="1"/>
<evidence type="ECO:0000255" key="2">
    <source>
        <dbReference type="PROSITE-ProRule" id="PRU00056"/>
    </source>
</evidence>
<evidence type="ECO:0000256" key="3">
    <source>
        <dbReference type="SAM" id="MobiDB-lite"/>
    </source>
</evidence>
<evidence type="ECO:0000269" key="4">
    <source>
    </source>
</evidence>
<evidence type="ECO:0000269" key="5">
    <source>
    </source>
</evidence>
<evidence type="ECO:0000303" key="6">
    <source>
    </source>
</evidence>
<evidence type="ECO:0000303" key="7">
    <source>
    </source>
</evidence>
<evidence type="ECO:0000303" key="8">
    <source>
    </source>
</evidence>
<evidence type="ECO:0000303" key="9">
    <source ref="5"/>
</evidence>
<evidence type="ECO:0000305" key="10"/>
<evidence type="ECO:0007744" key="11">
    <source>
    </source>
</evidence>